<accession>A4WFB1</accession>
<comment type="function">
    <text evidence="1">With S4 and S12 plays an important role in translational accuracy.</text>
</comment>
<comment type="function">
    <text evidence="1">Located at the back of the 30S subunit body where it stabilizes the conformation of the head with respect to the body.</text>
</comment>
<comment type="subunit">
    <text evidence="1">Part of the 30S ribosomal subunit. Contacts proteins S4 and S8.</text>
</comment>
<comment type="domain">
    <text>The N-terminal domain interacts with the head of the 30S subunit; the C-terminal domain interacts with the body and contacts protein S4. The interaction surface between S4 and S5 is involved in control of translational fidelity.</text>
</comment>
<comment type="similarity">
    <text evidence="1">Belongs to the universal ribosomal protein uS5 family.</text>
</comment>
<dbReference type="EMBL" id="CP000653">
    <property type="protein sequence ID" value="ABP62391.1"/>
    <property type="molecule type" value="Genomic_DNA"/>
</dbReference>
<dbReference type="RefSeq" id="WP_002438697.1">
    <property type="nucleotide sequence ID" value="NC_009436.1"/>
</dbReference>
<dbReference type="SMR" id="A4WFB1"/>
<dbReference type="STRING" id="399742.Ent638_3734"/>
<dbReference type="GeneID" id="97603652"/>
<dbReference type="KEGG" id="ent:Ent638_3734"/>
<dbReference type="eggNOG" id="COG0098">
    <property type="taxonomic scope" value="Bacteria"/>
</dbReference>
<dbReference type="HOGENOM" id="CLU_065898_2_2_6"/>
<dbReference type="OrthoDB" id="9809045at2"/>
<dbReference type="Proteomes" id="UP000000230">
    <property type="component" value="Chromosome"/>
</dbReference>
<dbReference type="GO" id="GO:0015935">
    <property type="term" value="C:small ribosomal subunit"/>
    <property type="evidence" value="ECO:0007669"/>
    <property type="project" value="InterPro"/>
</dbReference>
<dbReference type="GO" id="GO:0019843">
    <property type="term" value="F:rRNA binding"/>
    <property type="evidence" value="ECO:0007669"/>
    <property type="project" value="UniProtKB-UniRule"/>
</dbReference>
<dbReference type="GO" id="GO:0003735">
    <property type="term" value="F:structural constituent of ribosome"/>
    <property type="evidence" value="ECO:0007669"/>
    <property type="project" value="InterPro"/>
</dbReference>
<dbReference type="GO" id="GO:0006412">
    <property type="term" value="P:translation"/>
    <property type="evidence" value="ECO:0007669"/>
    <property type="project" value="UniProtKB-UniRule"/>
</dbReference>
<dbReference type="FunFam" id="3.30.160.20:FF:000001">
    <property type="entry name" value="30S ribosomal protein S5"/>
    <property type="match status" value="1"/>
</dbReference>
<dbReference type="FunFam" id="3.30.230.10:FF:000002">
    <property type="entry name" value="30S ribosomal protein S5"/>
    <property type="match status" value="1"/>
</dbReference>
<dbReference type="Gene3D" id="3.30.160.20">
    <property type="match status" value="1"/>
</dbReference>
<dbReference type="Gene3D" id="3.30.230.10">
    <property type="match status" value="1"/>
</dbReference>
<dbReference type="HAMAP" id="MF_01307_B">
    <property type="entry name" value="Ribosomal_uS5_B"/>
    <property type="match status" value="1"/>
</dbReference>
<dbReference type="InterPro" id="IPR020568">
    <property type="entry name" value="Ribosomal_Su5_D2-typ_SF"/>
</dbReference>
<dbReference type="InterPro" id="IPR000851">
    <property type="entry name" value="Ribosomal_uS5"/>
</dbReference>
<dbReference type="InterPro" id="IPR005712">
    <property type="entry name" value="Ribosomal_uS5_bac-type"/>
</dbReference>
<dbReference type="InterPro" id="IPR005324">
    <property type="entry name" value="Ribosomal_uS5_C"/>
</dbReference>
<dbReference type="InterPro" id="IPR013810">
    <property type="entry name" value="Ribosomal_uS5_N"/>
</dbReference>
<dbReference type="InterPro" id="IPR018192">
    <property type="entry name" value="Ribosomal_uS5_N_CS"/>
</dbReference>
<dbReference type="InterPro" id="IPR014721">
    <property type="entry name" value="Ribsml_uS5_D2-typ_fold_subgr"/>
</dbReference>
<dbReference type="NCBIfam" id="TIGR01021">
    <property type="entry name" value="rpsE_bact"/>
    <property type="match status" value="1"/>
</dbReference>
<dbReference type="PANTHER" id="PTHR48277">
    <property type="entry name" value="MITOCHONDRIAL RIBOSOMAL PROTEIN S5"/>
    <property type="match status" value="1"/>
</dbReference>
<dbReference type="PANTHER" id="PTHR48277:SF1">
    <property type="entry name" value="MITOCHONDRIAL RIBOSOMAL PROTEIN S5"/>
    <property type="match status" value="1"/>
</dbReference>
<dbReference type="Pfam" id="PF00333">
    <property type="entry name" value="Ribosomal_S5"/>
    <property type="match status" value="1"/>
</dbReference>
<dbReference type="Pfam" id="PF03719">
    <property type="entry name" value="Ribosomal_S5_C"/>
    <property type="match status" value="1"/>
</dbReference>
<dbReference type="SUPFAM" id="SSF54768">
    <property type="entry name" value="dsRNA-binding domain-like"/>
    <property type="match status" value="1"/>
</dbReference>
<dbReference type="SUPFAM" id="SSF54211">
    <property type="entry name" value="Ribosomal protein S5 domain 2-like"/>
    <property type="match status" value="1"/>
</dbReference>
<dbReference type="PROSITE" id="PS00585">
    <property type="entry name" value="RIBOSOMAL_S5"/>
    <property type="match status" value="1"/>
</dbReference>
<dbReference type="PROSITE" id="PS50881">
    <property type="entry name" value="S5_DSRBD"/>
    <property type="match status" value="1"/>
</dbReference>
<evidence type="ECO:0000255" key="1">
    <source>
        <dbReference type="HAMAP-Rule" id="MF_01307"/>
    </source>
</evidence>
<evidence type="ECO:0000305" key="2"/>
<keyword id="KW-0687">Ribonucleoprotein</keyword>
<keyword id="KW-0689">Ribosomal protein</keyword>
<keyword id="KW-0694">RNA-binding</keyword>
<keyword id="KW-0699">rRNA-binding</keyword>
<gene>
    <name evidence="1" type="primary">rpsE</name>
    <name type="ordered locus">Ent638_3734</name>
</gene>
<organism>
    <name type="scientific">Enterobacter sp. (strain 638)</name>
    <dbReference type="NCBI Taxonomy" id="399742"/>
    <lineage>
        <taxon>Bacteria</taxon>
        <taxon>Pseudomonadati</taxon>
        <taxon>Pseudomonadota</taxon>
        <taxon>Gammaproteobacteria</taxon>
        <taxon>Enterobacterales</taxon>
        <taxon>Enterobacteriaceae</taxon>
        <taxon>Enterobacter</taxon>
    </lineage>
</organism>
<name>RS5_ENT38</name>
<reference key="1">
    <citation type="journal article" date="2010" name="PLoS Genet.">
        <title>Genome sequence of the plant growth promoting endophytic bacterium Enterobacter sp. 638.</title>
        <authorList>
            <person name="Taghavi S."/>
            <person name="van der Lelie D."/>
            <person name="Hoffman A."/>
            <person name="Zhang Y.B."/>
            <person name="Walla M.D."/>
            <person name="Vangronsveld J."/>
            <person name="Newman L."/>
            <person name="Monchy S."/>
        </authorList>
    </citation>
    <scope>NUCLEOTIDE SEQUENCE [LARGE SCALE GENOMIC DNA]</scope>
    <source>
        <strain>638</strain>
    </source>
</reference>
<sequence length="166" mass="17498">MAHIEKQAGELQEKLIAVNRVSKTVKGGRIFSFTALTVVGDGNGRVGFGYGKAREVPAAIQKAMEKARRNMINVALNHGTLQHPVKGVHTGSRVFMQPASEGTGIIAGGAMRAVLEVAGVHNVLAKAYGSTNPINVVRATIDGLENMNSPEMVAAKRGKSVEEILG</sequence>
<feature type="chain" id="PRO_1000086009" description="Small ribosomal subunit protein uS5">
    <location>
        <begin position="1"/>
        <end position="166"/>
    </location>
</feature>
<feature type="domain" description="S5 DRBM" evidence="1">
    <location>
        <begin position="11"/>
        <end position="74"/>
    </location>
</feature>
<protein>
    <recommendedName>
        <fullName evidence="1">Small ribosomal subunit protein uS5</fullName>
    </recommendedName>
    <alternativeName>
        <fullName evidence="2">30S ribosomal protein S5</fullName>
    </alternativeName>
</protein>
<proteinExistence type="inferred from homology"/>